<accession>Q72RT8</accession>
<reference key="1">
    <citation type="journal article" date="2004" name="J. Bacteriol.">
        <title>Comparative genomics of two Leptospira interrogans serovars reveals novel insights into physiology and pathogenesis.</title>
        <authorList>
            <person name="Nascimento A.L.T.O."/>
            <person name="Ko A.I."/>
            <person name="Martins E.A.L."/>
            <person name="Monteiro-Vitorello C.B."/>
            <person name="Ho P.L."/>
            <person name="Haake D.A."/>
            <person name="Verjovski-Almeida S."/>
            <person name="Hartskeerl R.A."/>
            <person name="Marques M.V."/>
            <person name="Oliveira M.C."/>
            <person name="Menck C.F.M."/>
            <person name="Leite L.C.C."/>
            <person name="Carrer H."/>
            <person name="Coutinho L.L."/>
            <person name="Degrave W.M."/>
            <person name="Dellagostin O.A."/>
            <person name="El-Dorry H."/>
            <person name="Ferro E.S."/>
            <person name="Ferro M.I.T."/>
            <person name="Furlan L.R."/>
            <person name="Gamberini M."/>
            <person name="Giglioti E.A."/>
            <person name="Goes-Neto A."/>
            <person name="Goldman G.H."/>
            <person name="Goldman M.H.S."/>
            <person name="Harakava R."/>
            <person name="Jeronimo S.M.B."/>
            <person name="Junqueira-de-Azevedo I.L.M."/>
            <person name="Kimura E.T."/>
            <person name="Kuramae E.E."/>
            <person name="Lemos E.G.M."/>
            <person name="Lemos M.V.F."/>
            <person name="Marino C.L."/>
            <person name="Nunes L.R."/>
            <person name="de Oliveira R.C."/>
            <person name="Pereira G.G."/>
            <person name="Reis M.S."/>
            <person name="Schriefer A."/>
            <person name="Siqueira W.J."/>
            <person name="Sommer P."/>
            <person name="Tsai S.M."/>
            <person name="Simpson A.J.G."/>
            <person name="Ferro J.A."/>
            <person name="Camargo L.E.A."/>
            <person name="Kitajima J.P."/>
            <person name="Setubal J.C."/>
            <person name="Van Sluys M.A."/>
        </authorList>
    </citation>
    <scope>NUCLEOTIDE SEQUENCE [LARGE SCALE GENOMIC DNA]</scope>
    <source>
        <strain>Fiocruz L1-130</strain>
    </source>
</reference>
<name>TAL_LEPIC</name>
<feature type="chain" id="PRO_0000173669" description="Probable transaldolase">
    <location>
        <begin position="1"/>
        <end position="214"/>
    </location>
</feature>
<feature type="active site" description="Schiff-base intermediate with substrate" evidence="1">
    <location>
        <position position="83"/>
    </location>
</feature>
<protein>
    <recommendedName>
        <fullName evidence="1">Probable transaldolase</fullName>
        <ecNumber evidence="1">2.2.1.2</ecNumber>
    </recommendedName>
</protein>
<organism>
    <name type="scientific">Leptospira interrogans serogroup Icterohaemorrhagiae serovar copenhageni (strain Fiocruz L1-130)</name>
    <dbReference type="NCBI Taxonomy" id="267671"/>
    <lineage>
        <taxon>Bacteria</taxon>
        <taxon>Pseudomonadati</taxon>
        <taxon>Spirochaetota</taxon>
        <taxon>Spirochaetia</taxon>
        <taxon>Leptospirales</taxon>
        <taxon>Leptospiraceae</taxon>
        <taxon>Leptospira</taxon>
    </lineage>
</organism>
<keyword id="KW-0963">Cytoplasm</keyword>
<keyword id="KW-0570">Pentose shunt</keyword>
<keyword id="KW-0704">Schiff base</keyword>
<keyword id="KW-0808">Transferase</keyword>
<proteinExistence type="inferred from homology"/>
<sequence length="214" mass="23490">MELYLDTANVDEIKEIASYGLVDGVTTNPSLIAKSGRSFKEVIKEICSIVSGPVSAEVLSTKFDGMMKEALELVEIAENVVIKVPLIPEGLKTVVELTKRNIPTNVTLCFSAPQALLAAKAGATFISPFIGRVDDTSWDGMELISEIREIYDNYGYDTRILAASIRGPIHLKESALRGADCATMPHSAFLQLFKHPLTDIGLEKFLEDSKKLKW</sequence>
<comment type="function">
    <text evidence="1">Transaldolase is important for the balance of metabolites in the pentose-phosphate pathway.</text>
</comment>
<comment type="catalytic activity">
    <reaction evidence="1">
        <text>D-sedoheptulose 7-phosphate + D-glyceraldehyde 3-phosphate = D-erythrose 4-phosphate + beta-D-fructose 6-phosphate</text>
        <dbReference type="Rhea" id="RHEA:17053"/>
        <dbReference type="ChEBI" id="CHEBI:16897"/>
        <dbReference type="ChEBI" id="CHEBI:57483"/>
        <dbReference type="ChEBI" id="CHEBI:57634"/>
        <dbReference type="ChEBI" id="CHEBI:59776"/>
        <dbReference type="EC" id="2.2.1.2"/>
    </reaction>
</comment>
<comment type="pathway">
    <text evidence="1">Carbohydrate degradation; pentose phosphate pathway; D-glyceraldehyde 3-phosphate and beta-D-fructose 6-phosphate from D-ribose 5-phosphate and D-xylulose 5-phosphate (non-oxidative stage): step 2/3.</text>
</comment>
<comment type="subcellular location">
    <subcellularLocation>
        <location evidence="1">Cytoplasm</location>
    </subcellularLocation>
</comment>
<comment type="similarity">
    <text evidence="1">Belongs to the transaldolase family. Type 3B subfamily.</text>
</comment>
<gene>
    <name evidence="1" type="primary">tal</name>
    <name type="ordered locus">LIC_11652</name>
</gene>
<dbReference type="EC" id="2.2.1.2" evidence="1"/>
<dbReference type="EMBL" id="AE016823">
    <property type="protein sequence ID" value="AAS70245.1"/>
    <property type="molecule type" value="Genomic_DNA"/>
</dbReference>
<dbReference type="SMR" id="Q72RT8"/>
<dbReference type="KEGG" id="lic:LIC_11652"/>
<dbReference type="HOGENOM" id="CLU_079764_0_0_12"/>
<dbReference type="UniPathway" id="UPA00115">
    <property type="reaction ID" value="UER00414"/>
</dbReference>
<dbReference type="Proteomes" id="UP000007037">
    <property type="component" value="Chromosome I"/>
</dbReference>
<dbReference type="GO" id="GO:0005737">
    <property type="term" value="C:cytoplasm"/>
    <property type="evidence" value="ECO:0007669"/>
    <property type="project" value="UniProtKB-SubCell"/>
</dbReference>
<dbReference type="GO" id="GO:0016832">
    <property type="term" value="F:aldehyde-lyase activity"/>
    <property type="evidence" value="ECO:0007669"/>
    <property type="project" value="InterPro"/>
</dbReference>
<dbReference type="GO" id="GO:0004801">
    <property type="term" value="F:transaldolase activity"/>
    <property type="evidence" value="ECO:0007669"/>
    <property type="project" value="UniProtKB-UniRule"/>
</dbReference>
<dbReference type="GO" id="GO:0005975">
    <property type="term" value="P:carbohydrate metabolic process"/>
    <property type="evidence" value="ECO:0007669"/>
    <property type="project" value="InterPro"/>
</dbReference>
<dbReference type="GO" id="GO:0006098">
    <property type="term" value="P:pentose-phosphate shunt"/>
    <property type="evidence" value="ECO:0007669"/>
    <property type="project" value="UniProtKB-UniRule"/>
</dbReference>
<dbReference type="CDD" id="cd00956">
    <property type="entry name" value="Transaldolase_FSA"/>
    <property type="match status" value="1"/>
</dbReference>
<dbReference type="FunFam" id="3.20.20.70:FF:000018">
    <property type="entry name" value="Probable transaldolase"/>
    <property type="match status" value="1"/>
</dbReference>
<dbReference type="Gene3D" id="3.20.20.70">
    <property type="entry name" value="Aldolase class I"/>
    <property type="match status" value="1"/>
</dbReference>
<dbReference type="HAMAP" id="MF_00494">
    <property type="entry name" value="Transaldolase_3b"/>
    <property type="match status" value="1"/>
</dbReference>
<dbReference type="InterPro" id="IPR013785">
    <property type="entry name" value="Aldolase_TIM"/>
</dbReference>
<dbReference type="InterPro" id="IPR001585">
    <property type="entry name" value="TAL/FSA"/>
</dbReference>
<dbReference type="InterPro" id="IPR022999">
    <property type="entry name" value="Transaldolase_3B"/>
</dbReference>
<dbReference type="InterPro" id="IPR004731">
    <property type="entry name" value="Transaldolase_3B/F6P_aldolase"/>
</dbReference>
<dbReference type="InterPro" id="IPR018225">
    <property type="entry name" value="Transaldolase_AS"/>
</dbReference>
<dbReference type="InterPro" id="IPR033919">
    <property type="entry name" value="TSA/FSA_arc/bac"/>
</dbReference>
<dbReference type="NCBIfam" id="TIGR00875">
    <property type="entry name" value="fsa_talC_mipB"/>
    <property type="match status" value="1"/>
</dbReference>
<dbReference type="PANTHER" id="PTHR10683:SF40">
    <property type="entry name" value="FRUCTOSE-6-PHOSPHATE ALDOLASE 1-RELATED"/>
    <property type="match status" value="1"/>
</dbReference>
<dbReference type="PANTHER" id="PTHR10683">
    <property type="entry name" value="TRANSALDOLASE"/>
    <property type="match status" value="1"/>
</dbReference>
<dbReference type="Pfam" id="PF00923">
    <property type="entry name" value="TAL_FSA"/>
    <property type="match status" value="1"/>
</dbReference>
<dbReference type="SUPFAM" id="SSF51569">
    <property type="entry name" value="Aldolase"/>
    <property type="match status" value="1"/>
</dbReference>
<dbReference type="PROSITE" id="PS01054">
    <property type="entry name" value="TRANSALDOLASE_1"/>
    <property type="match status" value="1"/>
</dbReference>
<evidence type="ECO:0000255" key="1">
    <source>
        <dbReference type="HAMAP-Rule" id="MF_00494"/>
    </source>
</evidence>